<feature type="chain" id="PRO_0000120535" description="Uncharacterized aminotransferase YhxA">
    <location>
        <begin position="1"/>
        <end position="450"/>
    </location>
</feature>
<feature type="modified residue" description="N6-(pyridoxal phosphate)lysine" evidence="2">
    <location>
        <position position="283"/>
    </location>
</feature>
<feature type="sequence conflict" description="In Ref. 1; CAA65709 and 2; M99611." evidence="3" ref="1 2">
    <original>QL</original>
    <variation>HV</variation>
    <location>
        <begin position="424"/>
        <end position="425"/>
    </location>
</feature>
<dbReference type="EC" id="2.6.-.-"/>
<dbReference type="EMBL" id="Y14079">
    <property type="protein sequence ID" value="CAA74426.1"/>
    <property type="molecule type" value="Genomic_DNA"/>
</dbReference>
<dbReference type="EMBL" id="AL009126">
    <property type="protein sequence ID" value="CAB12754.2"/>
    <property type="molecule type" value="Genomic_DNA"/>
</dbReference>
<dbReference type="EMBL" id="X96983">
    <property type="protein sequence ID" value="CAA65709.1"/>
    <property type="molecule type" value="Genomic_DNA"/>
</dbReference>
<dbReference type="EMBL" id="M99611">
    <property type="status" value="NOT_ANNOTATED_CDS"/>
    <property type="molecule type" value="Genomic_DNA"/>
</dbReference>
<dbReference type="PIR" id="B69835">
    <property type="entry name" value="B69835"/>
</dbReference>
<dbReference type="RefSeq" id="NP_388807.2">
    <property type="nucleotide sequence ID" value="NC_000964.3"/>
</dbReference>
<dbReference type="RefSeq" id="WP_010886456.1">
    <property type="nucleotide sequence ID" value="NZ_OZ025638.1"/>
</dbReference>
<dbReference type="SMR" id="P33189"/>
<dbReference type="FunCoup" id="P33189">
    <property type="interactions" value="54"/>
</dbReference>
<dbReference type="STRING" id="224308.BSU09260"/>
<dbReference type="jPOST" id="P33189"/>
<dbReference type="PaxDb" id="224308-BSU09260"/>
<dbReference type="EnsemblBacteria" id="CAB12754">
    <property type="protein sequence ID" value="CAB12754"/>
    <property type="gene ID" value="BSU_09260"/>
</dbReference>
<dbReference type="GeneID" id="939742"/>
<dbReference type="KEGG" id="bsu:BSU09260"/>
<dbReference type="PATRIC" id="fig|224308.43.peg.968"/>
<dbReference type="eggNOG" id="COG0161">
    <property type="taxonomic scope" value="Bacteria"/>
</dbReference>
<dbReference type="InParanoid" id="P33189"/>
<dbReference type="OrthoDB" id="9807885at2"/>
<dbReference type="PhylomeDB" id="P33189"/>
<dbReference type="BioCyc" id="BSUB:BSU09260-MONOMER"/>
<dbReference type="Proteomes" id="UP000001570">
    <property type="component" value="Chromosome"/>
</dbReference>
<dbReference type="GO" id="GO:0004015">
    <property type="term" value="F:adenosylmethionine-8-amino-7-oxononanoate transaminase activity"/>
    <property type="evidence" value="ECO:0000318"/>
    <property type="project" value="GO_Central"/>
</dbReference>
<dbReference type="GO" id="GO:0030170">
    <property type="term" value="F:pyridoxal phosphate binding"/>
    <property type="evidence" value="ECO:0007669"/>
    <property type="project" value="InterPro"/>
</dbReference>
<dbReference type="GO" id="GO:0009102">
    <property type="term" value="P:biotin biosynthetic process"/>
    <property type="evidence" value="ECO:0000318"/>
    <property type="project" value="GO_Central"/>
</dbReference>
<dbReference type="GO" id="GO:0006071">
    <property type="term" value="P:glycerol metabolic process"/>
    <property type="evidence" value="ECO:0007669"/>
    <property type="project" value="UniProtKB-KW"/>
</dbReference>
<dbReference type="CDD" id="cd00610">
    <property type="entry name" value="OAT_like"/>
    <property type="match status" value="1"/>
</dbReference>
<dbReference type="FunFam" id="3.40.640.10:FF:000014">
    <property type="entry name" value="Adenosylmethionine-8-amino-7-oxononanoate aminotransferase, probable"/>
    <property type="match status" value="1"/>
</dbReference>
<dbReference type="Gene3D" id="3.90.1150.10">
    <property type="entry name" value="Aspartate Aminotransferase, domain 1"/>
    <property type="match status" value="1"/>
</dbReference>
<dbReference type="Gene3D" id="3.40.640.10">
    <property type="entry name" value="Type I PLP-dependent aspartate aminotransferase-like (Major domain)"/>
    <property type="match status" value="1"/>
</dbReference>
<dbReference type="InterPro" id="IPR005814">
    <property type="entry name" value="Aminotrans_3"/>
</dbReference>
<dbReference type="InterPro" id="IPR049704">
    <property type="entry name" value="Aminotrans_3_PPA_site"/>
</dbReference>
<dbReference type="InterPro" id="IPR015424">
    <property type="entry name" value="PyrdxlP-dep_Trfase"/>
</dbReference>
<dbReference type="InterPro" id="IPR015421">
    <property type="entry name" value="PyrdxlP-dep_Trfase_major"/>
</dbReference>
<dbReference type="InterPro" id="IPR015422">
    <property type="entry name" value="PyrdxlP-dep_Trfase_small"/>
</dbReference>
<dbReference type="NCBIfam" id="NF005812">
    <property type="entry name" value="PRK07678.1"/>
    <property type="match status" value="1"/>
</dbReference>
<dbReference type="PANTHER" id="PTHR43094">
    <property type="entry name" value="AMINOTRANSFERASE"/>
    <property type="match status" value="1"/>
</dbReference>
<dbReference type="PANTHER" id="PTHR43094:SF1">
    <property type="entry name" value="AMINOTRANSFERASE CLASS-III"/>
    <property type="match status" value="1"/>
</dbReference>
<dbReference type="Pfam" id="PF00202">
    <property type="entry name" value="Aminotran_3"/>
    <property type="match status" value="1"/>
</dbReference>
<dbReference type="PIRSF" id="PIRSF000521">
    <property type="entry name" value="Transaminase_4ab_Lys_Orn"/>
    <property type="match status" value="1"/>
</dbReference>
<dbReference type="SUPFAM" id="SSF53383">
    <property type="entry name" value="PLP-dependent transferases"/>
    <property type="match status" value="1"/>
</dbReference>
<dbReference type="PROSITE" id="PS00600">
    <property type="entry name" value="AA_TRANSFER_CLASS_3"/>
    <property type="match status" value="1"/>
</dbReference>
<evidence type="ECO:0000250" key="1"/>
<evidence type="ECO:0000255" key="2"/>
<evidence type="ECO:0000305" key="3"/>
<comment type="function">
    <text>Essential for glycerol catabolism.</text>
</comment>
<comment type="cofactor">
    <cofactor evidence="1">
        <name>pyridoxal 5'-phosphate</name>
        <dbReference type="ChEBI" id="CHEBI:597326"/>
    </cofactor>
</comment>
<comment type="similarity">
    <text evidence="3">Belongs to the class-III pyridoxal-phosphate-dependent aminotransferase family.</text>
</comment>
<proteinExistence type="inferred from homology"/>
<organism>
    <name type="scientific">Bacillus subtilis (strain 168)</name>
    <dbReference type="NCBI Taxonomy" id="224308"/>
    <lineage>
        <taxon>Bacteria</taxon>
        <taxon>Bacillati</taxon>
        <taxon>Bacillota</taxon>
        <taxon>Bacilli</taxon>
        <taxon>Bacillales</taxon>
        <taxon>Bacillaceae</taxon>
        <taxon>Bacillus</taxon>
    </lineage>
</organism>
<keyword id="KW-0032">Aminotransferase</keyword>
<keyword id="KW-0319">Glycerol metabolism</keyword>
<keyword id="KW-0663">Pyridoxal phosphate</keyword>
<keyword id="KW-1185">Reference proteome</keyword>
<keyword id="KW-0808">Transferase</keyword>
<reference key="1">
    <citation type="journal article" date="1998" name="Microbiology">
        <title>The 172 kb prkA-addAB region from 83 degrees to 97 degrees of the Bacillus subtilis chromosome contains several dysfunctional genes, the glyB marker, many genes encoding transporter proteins, and the ubiquitous hit gene.</title>
        <authorList>
            <person name="Noback M.A."/>
            <person name="Holsappel S."/>
            <person name="Kiewiet R."/>
            <person name="Terpstra P."/>
            <person name="Wambutt R."/>
            <person name="Wedler H."/>
            <person name="Venema G."/>
            <person name="Bron S."/>
        </authorList>
    </citation>
    <scope>NUCLEOTIDE SEQUENCE [GENOMIC DNA]</scope>
    <source>
        <strain>168</strain>
    </source>
</reference>
<reference key="2">
    <citation type="journal article" date="1997" name="Nature">
        <title>The complete genome sequence of the Gram-positive bacterium Bacillus subtilis.</title>
        <authorList>
            <person name="Kunst F."/>
            <person name="Ogasawara N."/>
            <person name="Moszer I."/>
            <person name="Albertini A.M."/>
            <person name="Alloni G."/>
            <person name="Azevedo V."/>
            <person name="Bertero M.G."/>
            <person name="Bessieres P."/>
            <person name="Bolotin A."/>
            <person name="Borchert S."/>
            <person name="Borriss R."/>
            <person name="Boursier L."/>
            <person name="Brans A."/>
            <person name="Braun M."/>
            <person name="Brignell S.C."/>
            <person name="Bron S."/>
            <person name="Brouillet S."/>
            <person name="Bruschi C.V."/>
            <person name="Caldwell B."/>
            <person name="Capuano V."/>
            <person name="Carter N.M."/>
            <person name="Choi S.-K."/>
            <person name="Codani J.-J."/>
            <person name="Connerton I.F."/>
            <person name="Cummings N.J."/>
            <person name="Daniel R.A."/>
            <person name="Denizot F."/>
            <person name="Devine K.M."/>
            <person name="Duesterhoeft A."/>
            <person name="Ehrlich S.D."/>
            <person name="Emmerson P.T."/>
            <person name="Entian K.-D."/>
            <person name="Errington J."/>
            <person name="Fabret C."/>
            <person name="Ferrari E."/>
            <person name="Foulger D."/>
            <person name="Fritz C."/>
            <person name="Fujita M."/>
            <person name="Fujita Y."/>
            <person name="Fuma S."/>
            <person name="Galizzi A."/>
            <person name="Galleron N."/>
            <person name="Ghim S.-Y."/>
            <person name="Glaser P."/>
            <person name="Goffeau A."/>
            <person name="Golightly E.J."/>
            <person name="Grandi G."/>
            <person name="Guiseppi G."/>
            <person name="Guy B.J."/>
            <person name="Haga K."/>
            <person name="Haiech J."/>
            <person name="Harwood C.R."/>
            <person name="Henaut A."/>
            <person name="Hilbert H."/>
            <person name="Holsappel S."/>
            <person name="Hosono S."/>
            <person name="Hullo M.-F."/>
            <person name="Itaya M."/>
            <person name="Jones L.-M."/>
            <person name="Joris B."/>
            <person name="Karamata D."/>
            <person name="Kasahara Y."/>
            <person name="Klaerr-Blanchard M."/>
            <person name="Klein C."/>
            <person name="Kobayashi Y."/>
            <person name="Koetter P."/>
            <person name="Koningstein G."/>
            <person name="Krogh S."/>
            <person name="Kumano M."/>
            <person name="Kurita K."/>
            <person name="Lapidus A."/>
            <person name="Lardinois S."/>
            <person name="Lauber J."/>
            <person name="Lazarevic V."/>
            <person name="Lee S.-M."/>
            <person name="Levine A."/>
            <person name="Liu H."/>
            <person name="Masuda S."/>
            <person name="Mauel C."/>
            <person name="Medigue C."/>
            <person name="Medina N."/>
            <person name="Mellado R.P."/>
            <person name="Mizuno M."/>
            <person name="Moestl D."/>
            <person name="Nakai S."/>
            <person name="Noback M."/>
            <person name="Noone D."/>
            <person name="O'Reilly M."/>
            <person name="Ogawa K."/>
            <person name="Ogiwara A."/>
            <person name="Oudega B."/>
            <person name="Park S.-H."/>
            <person name="Parro V."/>
            <person name="Pohl T.M."/>
            <person name="Portetelle D."/>
            <person name="Porwollik S."/>
            <person name="Prescott A.M."/>
            <person name="Presecan E."/>
            <person name="Pujic P."/>
            <person name="Purnelle B."/>
            <person name="Rapoport G."/>
            <person name="Rey M."/>
            <person name="Reynolds S."/>
            <person name="Rieger M."/>
            <person name="Rivolta C."/>
            <person name="Rocha E."/>
            <person name="Roche B."/>
            <person name="Rose M."/>
            <person name="Sadaie Y."/>
            <person name="Sato T."/>
            <person name="Scanlan E."/>
            <person name="Schleich S."/>
            <person name="Schroeter R."/>
            <person name="Scoffone F."/>
            <person name="Sekiguchi J."/>
            <person name="Sekowska A."/>
            <person name="Seror S.J."/>
            <person name="Serror P."/>
            <person name="Shin B.-S."/>
            <person name="Soldo B."/>
            <person name="Sorokin A."/>
            <person name="Tacconi E."/>
            <person name="Takagi T."/>
            <person name="Takahashi H."/>
            <person name="Takemaru K."/>
            <person name="Takeuchi M."/>
            <person name="Tamakoshi A."/>
            <person name="Tanaka T."/>
            <person name="Terpstra P."/>
            <person name="Tognoni A."/>
            <person name="Tosato V."/>
            <person name="Uchiyama S."/>
            <person name="Vandenbol M."/>
            <person name="Vannier F."/>
            <person name="Vassarotti A."/>
            <person name="Viari A."/>
            <person name="Wambutt R."/>
            <person name="Wedler E."/>
            <person name="Wedler H."/>
            <person name="Weitzenegger T."/>
            <person name="Winters P."/>
            <person name="Wipat A."/>
            <person name="Yamamoto H."/>
            <person name="Yamane K."/>
            <person name="Yasumoto K."/>
            <person name="Yata K."/>
            <person name="Yoshida K."/>
            <person name="Yoshikawa H.-F."/>
            <person name="Zumstein E."/>
            <person name="Yoshikawa H."/>
            <person name="Danchin A."/>
        </authorList>
    </citation>
    <scope>NUCLEOTIDE SEQUENCE [LARGE SCALE GENOMIC DNA]</scope>
    <source>
        <strain>168</strain>
    </source>
</reference>
<reference key="3">
    <citation type="journal article" date="2009" name="Microbiology">
        <title>From a consortium sequence to a unified sequence: the Bacillus subtilis 168 reference genome a decade later.</title>
        <authorList>
            <person name="Barbe V."/>
            <person name="Cruveiller S."/>
            <person name="Kunst F."/>
            <person name="Lenoble P."/>
            <person name="Meurice G."/>
            <person name="Sekowska A."/>
            <person name="Vallenet D."/>
            <person name="Wang T."/>
            <person name="Moszer I."/>
            <person name="Medigue C."/>
            <person name="Danchin A."/>
        </authorList>
    </citation>
    <scope>SEQUENCE REVISION TO 424-425</scope>
</reference>
<reference key="4">
    <citation type="journal article" date="1996" name="Microbiology">
        <title>A 22 kb DNA sequence in the cspB-glpPFKD region at 75 degrees on the Bacillus subtilis chromosome.</title>
        <authorList>
            <person name="Noback M.A."/>
            <person name="Terpstra P."/>
            <person name="Holsappel S."/>
            <person name="Venema G."/>
            <person name="Bron S."/>
        </authorList>
    </citation>
    <scope>NUCLEOTIDE SEQUENCE [GENOMIC DNA] OF 1-189</scope>
    <source>
        <strain>168</strain>
    </source>
</reference>
<reference key="5">
    <citation type="journal article" date="1993" name="J. Gen. Microbiol.">
        <title>The glpP and glpF genes of the glycerol regulon in Bacillus subtilis.</title>
        <authorList>
            <person name="Beijer L."/>
            <person name="Nilsson R.-P."/>
            <person name="Holmberg C."/>
            <person name="Rutberg L."/>
        </authorList>
    </citation>
    <scope>NUCLEOTIDE SEQUENCE [GENOMIC DNA] OF 352-450</scope>
</reference>
<protein>
    <recommendedName>
        <fullName>Uncharacterized aminotransferase YhxA</fullName>
        <ecNumber>2.6.-.-</ecNumber>
    </recommendedName>
</protein>
<sequence length="450" mass="49877">MEMMGMENIQQNQGLKQKDEQFVWHAMKGAHQADSLIAQKAEGAWVTDTDGRRYLDAMSGLWCVNIGYGRKELAEAAYEQLKELPYYPLTQSHAPAIQLAEKLNEWLGGDYVIFFSNSGSEANETAFKIARQYHLQNGDHSRYKFISRYRAYHGNTLGALSATGQAQRKYKYEPLSQGFLHAAPPDIYRNPDDADTLESANEIDRIMTWELSETIAGVIMEPIITGGGILMPPDGYMKKVEDICRRHGALLICDEVICGFGRTGEPFGFMHYGVKPDIITMAKGITSAYLPLSATAVKRDIFEAYQGEAPYDRFRHVNTFGGSPAACALALKNLQIMEDEQLIQRSRDLGAKLLGELQALREHPAVGDVRGKGLLIGIELVKDKLTKEPADAAKVNQVVAACKEKGLIIGKNGDTVAGYNNVIQLAPPFCLTEEDLSFIVKTVKESFQTI</sequence>
<gene>
    <name type="primary">yhxA</name>
    <name type="ordered locus">BSU09260</name>
</gene>
<name>YHXA_BACSU</name>
<accession>P33189</accession>
<accession>O07526</accession>